<accession>A0A8I3NGV2</accession>
<gene>
    <name evidence="4" type="primary">NCLN</name>
</gene>
<name>NCLN_CANLF</name>
<dbReference type="RefSeq" id="NP_001274007.1">
    <property type="nucleotide sequence ID" value="NM_001287078.2"/>
</dbReference>
<dbReference type="PDB" id="7TM3">
    <property type="method" value="EM"/>
    <property type="resolution" value="3.88 A"/>
    <property type="chains" value="7=1-563"/>
</dbReference>
<dbReference type="PDB" id="7TUT">
    <property type="method" value="EM"/>
    <property type="resolution" value="3.88 A"/>
    <property type="chains" value="7=1-563"/>
</dbReference>
<dbReference type="PDBsum" id="7TM3"/>
<dbReference type="PDBsum" id="7TUT"/>
<dbReference type="SMR" id="A0A8I3NGV2"/>
<dbReference type="FunCoup" id="A0A8I3NGV2">
    <property type="interactions" value="2240"/>
</dbReference>
<dbReference type="Ensembl" id="ENSCAFT00030013571.1">
    <property type="protein sequence ID" value="ENSCAFP00030011844.1"/>
    <property type="gene ID" value="ENSCAFG00030007391.1"/>
</dbReference>
<dbReference type="Ensembl" id="ENSCAFT00040016507.1">
    <property type="protein sequence ID" value="ENSCAFP00040014304.1"/>
    <property type="gene ID" value="ENSCAFG00040008879.1"/>
</dbReference>
<dbReference type="GeneID" id="485062"/>
<dbReference type="KEGG" id="cfa:485062"/>
<dbReference type="CTD" id="56926"/>
<dbReference type="OMA" id="WSTSRHC"/>
<dbReference type="OrthoDB" id="5913609at2759"/>
<dbReference type="Proteomes" id="UP000002254">
    <property type="component" value="Unplaced"/>
</dbReference>
<dbReference type="Proteomes" id="UP000694429">
    <property type="component" value="Chromosome 20"/>
</dbReference>
<dbReference type="Proteomes" id="UP000694542">
    <property type="component" value="Chromosome 20"/>
</dbReference>
<dbReference type="Proteomes" id="UP000805418">
    <property type="component" value="Unplaced"/>
</dbReference>
<dbReference type="GO" id="GO:0005789">
    <property type="term" value="C:endoplasmic reticulum membrane"/>
    <property type="evidence" value="ECO:0000314"/>
    <property type="project" value="UniProtKB"/>
</dbReference>
<dbReference type="GO" id="GO:0160064">
    <property type="term" value="C:multi-pass translocon complex"/>
    <property type="evidence" value="ECO:0000314"/>
    <property type="project" value="UniProtKB"/>
</dbReference>
<dbReference type="GO" id="GO:0160063">
    <property type="term" value="P:multi-pass transmembrane protein insertion into ER membrane"/>
    <property type="evidence" value="ECO:0000314"/>
    <property type="project" value="UniProtKB"/>
</dbReference>
<dbReference type="GO" id="GO:0009966">
    <property type="term" value="P:regulation of signal transduction"/>
    <property type="evidence" value="ECO:0000318"/>
    <property type="project" value="GO_Central"/>
</dbReference>
<dbReference type="CDD" id="cd03882">
    <property type="entry name" value="M28_nicalin_like"/>
    <property type="match status" value="1"/>
</dbReference>
<dbReference type="FunFam" id="3.40.630.10:FF:000021">
    <property type="entry name" value="Nicalin"/>
    <property type="match status" value="1"/>
</dbReference>
<dbReference type="Gene3D" id="3.40.630.10">
    <property type="entry name" value="Zn peptidases"/>
    <property type="match status" value="1"/>
</dbReference>
<dbReference type="InterPro" id="IPR016574">
    <property type="entry name" value="Nicalin"/>
</dbReference>
<dbReference type="InterPro" id="IPR007484">
    <property type="entry name" value="Peptidase_M28"/>
</dbReference>
<dbReference type="PANTHER" id="PTHR31826">
    <property type="entry name" value="NICALIN"/>
    <property type="match status" value="1"/>
</dbReference>
<dbReference type="Pfam" id="PF04389">
    <property type="entry name" value="Peptidase_M28"/>
    <property type="match status" value="1"/>
</dbReference>
<dbReference type="PIRSF" id="PIRSF011018">
    <property type="entry name" value="Nicalin"/>
    <property type="match status" value="1"/>
</dbReference>
<dbReference type="SUPFAM" id="SSF53187">
    <property type="entry name" value="Zn-dependent exopeptidases"/>
    <property type="match status" value="1"/>
</dbReference>
<proteinExistence type="evidence at protein level"/>
<comment type="function">
    <text evidence="1 3">Component of the multi-pass translocon (MPT) complex that mediates insertion of multi-pass membrane proteins into the lipid bilayer of membranes (PubMed:36261528). The MPT complex takes over after the SEC61 complex: following membrane insertion of the first few transmembrane segments of proteins by the SEC61 complex, the MPT complex occludes the lateral gate of the SEC61 complex to promote insertion of subsequent transmembrane regions (PubMed:36261528). May antagonize Nodal signaling and subsequent organization of axial structures during mesodermal patterning, via its interaction with NOMO (By similarity).</text>
</comment>
<comment type="subunit">
    <text evidence="3">Component of the back of Sec61 (BOS) complex, composed of NCLN/Nicalin, NOMO1 and TMEM147 (PubMed:36261528). The BOS complex is part of the multi-pass translocon (MPT) complex, composed of three subcomplexes, the GEL complex (composed of RAB5IF/OPTI and TMCO1), the BOS complex (composed of NCLN/Nicalin, NOMO1 and TMEM147) and the PAT complex (composed of WDR83OS/Asterix and CCDC47) (PubMed:36261528). The MPT complex associates with the SEC61 complex (PubMed:36261528).</text>
</comment>
<comment type="subcellular location">
    <subcellularLocation>
        <location evidence="3">Endoplasmic reticulum membrane</location>
        <topology evidence="3">Single-pass type I membrane protein</topology>
    </subcellularLocation>
</comment>
<comment type="similarity">
    <text evidence="5">Belongs to the nicastrin family.</text>
</comment>
<reference key="1">
    <citation type="journal article" date="2005" name="Nature">
        <title>Genome sequence, comparative analysis and haplotype structure of the domestic dog.</title>
        <authorList>
            <person name="Lindblad-Toh K."/>
            <person name="Wade C.M."/>
            <person name="Mikkelsen T.S."/>
            <person name="Karlsson E.K."/>
            <person name="Jaffe D.B."/>
            <person name="Kamal M."/>
            <person name="Clamp M."/>
            <person name="Chang J.L."/>
            <person name="Kulbokas E.J. III"/>
            <person name="Zody M.C."/>
            <person name="Mauceli E."/>
            <person name="Xie X."/>
            <person name="Breen M."/>
            <person name="Wayne R.K."/>
            <person name="Ostrander E.A."/>
            <person name="Ponting C.P."/>
            <person name="Galibert F."/>
            <person name="Smith D.R."/>
            <person name="deJong P.J."/>
            <person name="Kirkness E.F."/>
            <person name="Alvarez P."/>
            <person name="Biagi T."/>
            <person name="Brockman W."/>
            <person name="Butler J."/>
            <person name="Chin C.-W."/>
            <person name="Cook A."/>
            <person name="Cuff J."/>
            <person name="Daly M.J."/>
            <person name="DeCaprio D."/>
            <person name="Gnerre S."/>
            <person name="Grabherr M."/>
            <person name="Kellis M."/>
            <person name="Kleber M."/>
            <person name="Bardeleben C."/>
            <person name="Goodstadt L."/>
            <person name="Heger A."/>
            <person name="Hitte C."/>
            <person name="Kim L."/>
            <person name="Koepfli K.-P."/>
            <person name="Parker H.G."/>
            <person name="Pollinger J.P."/>
            <person name="Searle S.M.J."/>
            <person name="Sutter N.B."/>
            <person name="Thomas R."/>
            <person name="Webber C."/>
            <person name="Baldwin J."/>
            <person name="Abebe A."/>
            <person name="Abouelleil A."/>
            <person name="Aftuck L."/>
            <person name="Ait-Zahra M."/>
            <person name="Aldredge T."/>
            <person name="Allen N."/>
            <person name="An P."/>
            <person name="Anderson S."/>
            <person name="Antoine C."/>
            <person name="Arachchi H."/>
            <person name="Aslam A."/>
            <person name="Ayotte L."/>
            <person name="Bachantsang P."/>
            <person name="Barry A."/>
            <person name="Bayul T."/>
            <person name="Benamara M."/>
            <person name="Berlin A."/>
            <person name="Bessette D."/>
            <person name="Blitshteyn B."/>
            <person name="Bloom T."/>
            <person name="Blye J."/>
            <person name="Boguslavskiy L."/>
            <person name="Bonnet C."/>
            <person name="Boukhgalter B."/>
            <person name="Brown A."/>
            <person name="Cahill P."/>
            <person name="Calixte N."/>
            <person name="Camarata J."/>
            <person name="Cheshatsang Y."/>
            <person name="Chu J."/>
            <person name="Citroen M."/>
            <person name="Collymore A."/>
            <person name="Cooke P."/>
            <person name="Dawoe T."/>
            <person name="Daza R."/>
            <person name="Decktor K."/>
            <person name="DeGray S."/>
            <person name="Dhargay N."/>
            <person name="Dooley K."/>
            <person name="Dooley K."/>
            <person name="Dorje P."/>
            <person name="Dorjee K."/>
            <person name="Dorris L."/>
            <person name="Duffey N."/>
            <person name="Dupes A."/>
            <person name="Egbiremolen O."/>
            <person name="Elong R."/>
            <person name="Falk J."/>
            <person name="Farina A."/>
            <person name="Faro S."/>
            <person name="Ferguson D."/>
            <person name="Ferreira P."/>
            <person name="Fisher S."/>
            <person name="FitzGerald M."/>
            <person name="Foley K."/>
            <person name="Foley C."/>
            <person name="Franke A."/>
            <person name="Friedrich D."/>
            <person name="Gage D."/>
            <person name="Garber M."/>
            <person name="Gearin G."/>
            <person name="Giannoukos G."/>
            <person name="Goode T."/>
            <person name="Goyette A."/>
            <person name="Graham J."/>
            <person name="Grandbois E."/>
            <person name="Gyaltsen K."/>
            <person name="Hafez N."/>
            <person name="Hagopian D."/>
            <person name="Hagos B."/>
            <person name="Hall J."/>
            <person name="Healy C."/>
            <person name="Hegarty R."/>
            <person name="Honan T."/>
            <person name="Horn A."/>
            <person name="Houde N."/>
            <person name="Hughes L."/>
            <person name="Hunnicutt L."/>
            <person name="Husby M."/>
            <person name="Jester B."/>
            <person name="Jones C."/>
            <person name="Kamat A."/>
            <person name="Kanga B."/>
            <person name="Kells C."/>
            <person name="Khazanovich D."/>
            <person name="Kieu A.C."/>
            <person name="Kisner P."/>
            <person name="Kumar M."/>
            <person name="Lance K."/>
            <person name="Landers T."/>
            <person name="Lara M."/>
            <person name="Lee W."/>
            <person name="Leger J.-P."/>
            <person name="Lennon N."/>
            <person name="Leuper L."/>
            <person name="LeVine S."/>
            <person name="Liu J."/>
            <person name="Liu X."/>
            <person name="Lokyitsang Y."/>
            <person name="Lokyitsang T."/>
            <person name="Lui A."/>
            <person name="Macdonald J."/>
            <person name="Major J."/>
            <person name="Marabella R."/>
            <person name="Maru K."/>
            <person name="Matthews C."/>
            <person name="McDonough S."/>
            <person name="Mehta T."/>
            <person name="Meldrim J."/>
            <person name="Melnikov A."/>
            <person name="Meneus L."/>
            <person name="Mihalev A."/>
            <person name="Mihova T."/>
            <person name="Miller K."/>
            <person name="Mittelman R."/>
            <person name="Mlenga V."/>
            <person name="Mulrain L."/>
            <person name="Munson G."/>
            <person name="Navidi A."/>
            <person name="Naylor J."/>
            <person name="Nguyen T."/>
            <person name="Nguyen N."/>
            <person name="Nguyen C."/>
            <person name="Nguyen T."/>
            <person name="Nicol R."/>
            <person name="Norbu N."/>
            <person name="Norbu C."/>
            <person name="Novod N."/>
            <person name="Nyima T."/>
            <person name="Olandt P."/>
            <person name="O'Neill B."/>
            <person name="O'Neill K."/>
            <person name="Osman S."/>
            <person name="Oyono L."/>
            <person name="Patti C."/>
            <person name="Perrin D."/>
            <person name="Phunkhang P."/>
            <person name="Pierre F."/>
            <person name="Priest M."/>
            <person name="Rachupka A."/>
            <person name="Raghuraman S."/>
            <person name="Rameau R."/>
            <person name="Ray V."/>
            <person name="Raymond C."/>
            <person name="Rege F."/>
            <person name="Rise C."/>
            <person name="Rogers J."/>
            <person name="Rogov P."/>
            <person name="Sahalie J."/>
            <person name="Settipalli S."/>
            <person name="Sharpe T."/>
            <person name="Shea T."/>
            <person name="Sheehan M."/>
            <person name="Sherpa N."/>
            <person name="Shi J."/>
            <person name="Shih D."/>
            <person name="Sloan J."/>
            <person name="Smith C."/>
            <person name="Sparrow T."/>
            <person name="Stalker J."/>
            <person name="Stange-Thomann N."/>
            <person name="Stavropoulos S."/>
            <person name="Stone C."/>
            <person name="Stone S."/>
            <person name="Sykes S."/>
            <person name="Tchuinga P."/>
            <person name="Tenzing P."/>
            <person name="Tesfaye S."/>
            <person name="Thoulutsang D."/>
            <person name="Thoulutsang Y."/>
            <person name="Topham K."/>
            <person name="Topping I."/>
            <person name="Tsamla T."/>
            <person name="Vassiliev H."/>
            <person name="Venkataraman V."/>
            <person name="Vo A."/>
            <person name="Wangchuk T."/>
            <person name="Wangdi T."/>
            <person name="Weiand M."/>
            <person name="Wilkinson J."/>
            <person name="Wilson A."/>
            <person name="Yadav S."/>
            <person name="Yang S."/>
            <person name="Yang X."/>
            <person name="Young G."/>
            <person name="Yu Q."/>
            <person name="Zainoun J."/>
            <person name="Zembek L."/>
            <person name="Zimmer A."/>
            <person name="Lander E.S."/>
        </authorList>
    </citation>
    <scope>NUCLEOTIDE SEQUENCE [LARGE SCALE GENOMIC DNA]</scope>
    <source>
        <strain>Boxer</strain>
    </source>
</reference>
<reference evidence="7 8" key="2">
    <citation type="journal article" date="2022" name="Nature">
        <title>Mechanism of an intramembrane chaperone for multipass membrane proteins.</title>
        <authorList>
            <person name="Smalinskaite L."/>
            <person name="Kim M.K."/>
            <person name="Lewis A.J.O."/>
            <person name="Keenan R.J."/>
            <person name="Hegde R.S."/>
        </authorList>
    </citation>
    <scope>STRUCTURE BY ELECTRON MICROSCOPY (3.88 ANGSTROMS) IN COMPLEX WITH THE MULTI-PASS TRANSLOCON COMPLEX</scope>
    <scope>FUNCTION</scope>
    <scope>IDENTIFICATION IN THE MULTI-PASS TRANSLOCON COMPLEX</scope>
    <scope>SUBCELLULAR LOCATION</scope>
</reference>
<organism>
    <name type="scientific">Canis lupus familiaris</name>
    <name type="common">Dog</name>
    <name type="synonym">Canis familiaris</name>
    <dbReference type="NCBI Taxonomy" id="9615"/>
    <lineage>
        <taxon>Eukaryota</taxon>
        <taxon>Metazoa</taxon>
        <taxon>Chordata</taxon>
        <taxon>Craniata</taxon>
        <taxon>Vertebrata</taxon>
        <taxon>Euteleostomi</taxon>
        <taxon>Mammalia</taxon>
        <taxon>Eutheria</taxon>
        <taxon>Laurasiatheria</taxon>
        <taxon>Carnivora</taxon>
        <taxon>Caniformia</taxon>
        <taxon>Canidae</taxon>
        <taxon>Canis</taxon>
    </lineage>
</organism>
<keyword id="KW-0002">3D-structure</keyword>
<keyword id="KW-0256">Endoplasmic reticulum</keyword>
<keyword id="KW-0325">Glycoprotein</keyword>
<keyword id="KW-0472">Membrane</keyword>
<keyword id="KW-1185">Reference proteome</keyword>
<keyword id="KW-0732">Signal</keyword>
<keyword id="KW-0812">Transmembrane</keyword>
<keyword id="KW-1133">Transmembrane helix</keyword>
<protein>
    <recommendedName>
        <fullName evidence="5">BOS complex subunit NCLN</fullName>
    </recommendedName>
    <alternativeName>
        <fullName evidence="4">Nicalin</fullName>
    </alternativeName>
</protein>
<feature type="signal peptide" evidence="2">
    <location>
        <begin position="1"/>
        <end position="42"/>
    </location>
</feature>
<feature type="chain" id="PRO_0000457554" description="BOS complex subunit NCLN">
    <location>
        <begin position="43"/>
        <end position="563"/>
    </location>
</feature>
<feature type="topological domain" description="Lumenal" evidence="6 7 8">
    <location>
        <begin position="43"/>
        <end position="522"/>
    </location>
</feature>
<feature type="transmembrane region" description="Helical" evidence="6 7 8">
    <location>
        <begin position="523"/>
        <end position="543"/>
    </location>
</feature>
<feature type="topological domain" description="Cytoplasmic" evidence="6 7 8">
    <location>
        <begin position="544"/>
        <end position="563"/>
    </location>
</feature>
<feature type="glycosylation site" description="N-linked (GlcNAc...) asparagine" evidence="2">
    <location>
        <position position="241"/>
    </location>
</feature>
<feature type="glycosylation site" description="N-linked (GlcNAc...) asparagine" evidence="2">
    <location>
        <position position="428"/>
    </location>
</feature>
<sequence length="563" mass="63100">MLEEAGEVLENMLKASCLPLGFIVFLPAVLLLVAPPLPAADAAHEFTVYRMQQYDLQGQPYGTRNAVLNTEARTIDADVLSRRCVLMRLLDFSYEQYQKALRQSAGAVVIILPRAMAAVPQDVIRQFMETEPEMLAMETVVPVYFAVEDEALLSIYEQTQAASAAQGSASAAEVLLHTATANGFQMVTSGVQSKAVSDWLITSVEGRLTGLGGEDLPTIVIVAHYDAFGVAPWLSHGADSNGSGISVLLELARLFSRLYTYKRTHAAYNLLFFASGGGKFNYQGTKRWLEDNLDHTDSSLLQDNVAFVLCLDTVGRGDSLHLHVSKPPREGTLQHAFLRELEAVAAHQFPEVRFSMVHKKINLAEDILAWEHERFAIRRLPAFTLSHLESHRDGQRSSIMDVRSRVDSKTLTRNTRLIAEALTRVIYNLTEKGTPPDMPVFTEQMQIQQEQLDSVMDWLTNQPRAAQLVDKDGTLLSTLEHYLSRYLKEVKQHHIKADKRDPEFVFYDQLKQVMNAYRVKPAIFDLLLAVCIGAYLGMAYTAVQHFDLLYKTVQRLLVKAKTQ</sequence>
<evidence type="ECO:0000250" key="1">
    <source>
        <dbReference type="UniProtKB" id="Q6NZ07"/>
    </source>
</evidence>
<evidence type="ECO:0000255" key="2"/>
<evidence type="ECO:0000269" key="3">
    <source>
    </source>
</evidence>
<evidence type="ECO:0000303" key="4">
    <source>
    </source>
</evidence>
<evidence type="ECO:0000305" key="5"/>
<evidence type="ECO:0000305" key="6">
    <source>
    </source>
</evidence>
<evidence type="ECO:0007744" key="7">
    <source>
        <dbReference type="PDB" id="7TM3"/>
    </source>
</evidence>
<evidence type="ECO:0007744" key="8">
    <source>
        <dbReference type="PDB" id="7TUT"/>
    </source>
</evidence>